<organism>
    <name type="scientific">Aromatoleum aromaticum (strain DSM 19018 / LMG 30748 / EbN1)</name>
    <name type="common">Azoarcus sp. (strain EbN1)</name>
    <dbReference type="NCBI Taxonomy" id="76114"/>
    <lineage>
        <taxon>Bacteria</taxon>
        <taxon>Pseudomonadati</taxon>
        <taxon>Pseudomonadota</taxon>
        <taxon>Betaproteobacteria</taxon>
        <taxon>Rhodocyclales</taxon>
        <taxon>Rhodocyclaceae</taxon>
        <taxon>Aromatoleum</taxon>
    </lineage>
</organism>
<feature type="chain" id="PRO_0000094190" description="Elongation factor P">
    <location>
        <begin position="1"/>
        <end position="185"/>
    </location>
</feature>
<gene>
    <name evidence="1" type="primary">efp</name>
    <name type="ordered locus">AZOSEA16740</name>
    <name type="ORF">ebA2973</name>
</gene>
<keyword id="KW-0963">Cytoplasm</keyword>
<keyword id="KW-0251">Elongation factor</keyword>
<keyword id="KW-0648">Protein biosynthesis</keyword>
<keyword id="KW-1185">Reference proteome</keyword>
<reference key="1">
    <citation type="journal article" date="2005" name="Arch. Microbiol.">
        <title>The genome sequence of an anaerobic aromatic-degrading denitrifying bacterium, strain EbN1.</title>
        <authorList>
            <person name="Rabus R."/>
            <person name="Kube M."/>
            <person name="Heider J."/>
            <person name="Beck A."/>
            <person name="Heitmann K."/>
            <person name="Widdel F."/>
            <person name="Reinhardt R."/>
        </authorList>
    </citation>
    <scope>NUCLEOTIDE SEQUENCE [LARGE SCALE GENOMIC DNA]</scope>
    <source>
        <strain>DSM 19018 / LMG 30748 / EbN1</strain>
    </source>
</reference>
<evidence type="ECO:0000255" key="1">
    <source>
        <dbReference type="HAMAP-Rule" id="MF_00141"/>
    </source>
</evidence>
<name>EFP_AROAE</name>
<comment type="function">
    <text evidence="1">Involved in peptide bond synthesis. Stimulates efficient translation and peptide-bond synthesis on native or reconstituted 70S ribosomes in vitro. Probably functions indirectly by altering the affinity of the ribosome for aminoacyl-tRNA, thus increasing their reactivity as acceptors for peptidyl transferase.</text>
</comment>
<comment type="pathway">
    <text evidence="1">Protein biosynthesis; polypeptide chain elongation.</text>
</comment>
<comment type="subcellular location">
    <subcellularLocation>
        <location evidence="1">Cytoplasm</location>
    </subcellularLocation>
</comment>
<comment type="similarity">
    <text evidence="1">Belongs to the elongation factor P family.</text>
</comment>
<dbReference type="EMBL" id="CR555306">
    <property type="protein sequence ID" value="CAI07799.1"/>
    <property type="molecule type" value="Genomic_DNA"/>
</dbReference>
<dbReference type="RefSeq" id="WP_011237513.1">
    <property type="nucleotide sequence ID" value="NC_006513.1"/>
</dbReference>
<dbReference type="SMR" id="Q5P4G4"/>
<dbReference type="STRING" id="76114.ebA2973"/>
<dbReference type="KEGG" id="eba:ebA2973"/>
<dbReference type="eggNOG" id="COG0231">
    <property type="taxonomic scope" value="Bacteria"/>
</dbReference>
<dbReference type="HOGENOM" id="CLU_074944_2_1_4"/>
<dbReference type="OrthoDB" id="9801844at2"/>
<dbReference type="UniPathway" id="UPA00345"/>
<dbReference type="Proteomes" id="UP000006552">
    <property type="component" value="Chromosome"/>
</dbReference>
<dbReference type="GO" id="GO:0005737">
    <property type="term" value="C:cytoplasm"/>
    <property type="evidence" value="ECO:0007669"/>
    <property type="project" value="UniProtKB-SubCell"/>
</dbReference>
<dbReference type="GO" id="GO:0003746">
    <property type="term" value="F:translation elongation factor activity"/>
    <property type="evidence" value="ECO:0007669"/>
    <property type="project" value="UniProtKB-UniRule"/>
</dbReference>
<dbReference type="GO" id="GO:0043043">
    <property type="term" value="P:peptide biosynthetic process"/>
    <property type="evidence" value="ECO:0007669"/>
    <property type="project" value="InterPro"/>
</dbReference>
<dbReference type="CDD" id="cd04470">
    <property type="entry name" value="S1_EF-P_repeat_1"/>
    <property type="match status" value="1"/>
</dbReference>
<dbReference type="CDD" id="cd05794">
    <property type="entry name" value="S1_EF-P_repeat_2"/>
    <property type="match status" value="1"/>
</dbReference>
<dbReference type="FunFam" id="2.30.30.30:FF:000003">
    <property type="entry name" value="Elongation factor P"/>
    <property type="match status" value="1"/>
</dbReference>
<dbReference type="FunFam" id="2.40.50.140:FF:000004">
    <property type="entry name" value="Elongation factor P"/>
    <property type="match status" value="1"/>
</dbReference>
<dbReference type="FunFam" id="2.40.50.140:FF:000009">
    <property type="entry name" value="Elongation factor P"/>
    <property type="match status" value="1"/>
</dbReference>
<dbReference type="Gene3D" id="2.30.30.30">
    <property type="match status" value="1"/>
</dbReference>
<dbReference type="Gene3D" id="2.40.50.140">
    <property type="entry name" value="Nucleic acid-binding proteins"/>
    <property type="match status" value="2"/>
</dbReference>
<dbReference type="HAMAP" id="MF_00141">
    <property type="entry name" value="EF_P"/>
    <property type="match status" value="1"/>
</dbReference>
<dbReference type="InterPro" id="IPR015365">
    <property type="entry name" value="Elong-fact-P_C"/>
</dbReference>
<dbReference type="InterPro" id="IPR012340">
    <property type="entry name" value="NA-bd_OB-fold"/>
</dbReference>
<dbReference type="InterPro" id="IPR014722">
    <property type="entry name" value="Rib_uL2_dom2"/>
</dbReference>
<dbReference type="InterPro" id="IPR020599">
    <property type="entry name" value="Transl_elong_fac_P/YeiP"/>
</dbReference>
<dbReference type="InterPro" id="IPR013185">
    <property type="entry name" value="Transl_elong_KOW-like"/>
</dbReference>
<dbReference type="InterPro" id="IPR001059">
    <property type="entry name" value="Transl_elong_P/YeiP_cen"/>
</dbReference>
<dbReference type="InterPro" id="IPR013852">
    <property type="entry name" value="Transl_elong_P/YeiP_CS"/>
</dbReference>
<dbReference type="InterPro" id="IPR011768">
    <property type="entry name" value="Transl_elongation_fac_P"/>
</dbReference>
<dbReference type="InterPro" id="IPR008991">
    <property type="entry name" value="Translation_prot_SH3-like_sf"/>
</dbReference>
<dbReference type="NCBIfam" id="TIGR00038">
    <property type="entry name" value="efp"/>
    <property type="match status" value="1"/>
</dbReference>
<dbReference type="NCBIfam" id="NF001810">
    <property type="entry name" value="PRK00529.1"/>
    <property type="match status" value="1"/>
</dbReference>
<dbReference type="PANTHER" id="PTHR30053">
    <property type="entry name" value="ELONGATION FACTOR P"/>
    <property type="match status" value="1"/>
</dbReference>
<dbReference type="PANTHER" id="PTHR30053:SF12">
    <property type="entry name" value="ELONGATION FACTOR P (EF-P) FAMILY PROTEIN"/>
    <property type="match status" value="1"/>
</dbReference>
<dbReference type="Pfam" id="PF01132">
    <property type="entry name" value="EFP"/>
    <property type="match status" value="1"/>
</dbReference>
<dbReference type="Pfam" id="PF08207">
    <property type="entry name" value="EFP_N"/>
    <property type="match status" value="1"/>
</dbReference>
<dbReference type="Pfam" id="PF09285">
    <property type="entry name" value="Elong-fact-P_C"/>
    <property type="match status" value="1"/>
</dbReference>
<dbReference type="PIRSF" id="PIRSF005901">
    <property type="entry name" value="EF-P"/>
    <property type="match status" value="1"/>
</dbReference>
<dbReference type="SMART" id="SM01185">
    <property type="entry name" value="EFP"/>
    <property type="match status" value="1"/>
</dbReference>
<dbReference type="SMART" id="SM00841">
    <property type="entry name" value="Elong-fact-P_C"/>
    <property type="match status" value="1"/>
</dbReference>
<dbReference type="SUPFAM" id="SSF50249">
    <property type="entry name" value="Nucleic acid-binding proteins"/>
    <property type="match status" value="2"/>
</dbReference>
<dbReference type="SUPFAM" id="SSF50104">
    <property type="entry name" value="Translation proteins SH3-like domain"/>
    <property type="match status" value="1"/>
</dbReference>
<dbReference type="PROSITE" id="PS01275">
    <property type="entry name" value="EFP"/>
    <property type="match status" value="1"/>
</dbReference>
<proteinExistence type="inferred from homology"/>
<protein>
    <recommendedName>
        <fullName evidence="1">Elongation factor P</fullName>
        <shortName evidence="1">EF-P</shortName>
    </recommendedName>
</protein>
<accession>Q5P4G4</accession>
<sequence>MKTAQELRSGNVIMVGADALVVQKAEYNKSGRNSAVVKMKLKNLLTGAPSESVYKADDKFEVVQLDKKEVTYSYFADPMYVFMDADYEQYEVEAENMTDALKYLEDGLQCEVVFYNGKAISVDLPNSVVREVIYTEPAVKGDTSGKVMKPAKIASGFELPVPAFVEIGDKIEIDTRTDEYKNRVK</sequence>